<reference key="1">
    <citation type="journal article" date="2006" name="Nat. Biotechnol.">
        <title>The genome and transcriptomes of the anti-tumor agent Clostridium novyi-NT.</title>
        <authorList>
            <person name="Bettegowda C."/>
            <person name="Huang X."/>
            <person name="Lin J."/>
            <person name="Cheong I."/>
            <person name="Kohli M."/>
            <person name="Szabo S.A."/>
            <person name="Zhang X."/>
            <person name="Diaz L.A. Jr."/>
            <person name="Velculescu V.E."/>
            <person name="Parmigiani G."/>
            <person name="Kinzler K.W."/>
            <person name="Vogelstein B."/>
            <person name="Zhou S."/>
        </authorList>
    </citation>
    <scope>NUCLEOTIDE SEQUENCE [LARGE SCALE GENOMIC DNA]</scope>
    <source>
        <strain>NT</strain>
    </source>
</reference>
<name>OBG_CLONN</name>
<keyword id="KW-0963">Cytoplasm</keyword>
<keyword id="KW-0342">GTP-binding</keyword>
<keyword id="KW-0378">Hydrolase</keyword>
<keyword id="KW-0460">Magnesium</keyword>
<keyword id="KW-0479">Metal-binding</keyword>
<keyword id="KW-0547">Nucleotide-binding</keyword>
<keyword id="KW-1185">Reference proteome</keyword>
<dbReference type="EC" id="3.6.5.-" evidence="1"/>
<dbReference type="EMBL" id="CP000382">
    <property type="protein sequence ID" value="ABK62267.1"/>
    <property type="molecule type" value="Genomic_DNA"/>
</dbReference>
<dbReference type="SMR" id="A0Q1T4"/>
<dbReference type="STRING" id="386415.NT01CX_0077"/>
<dbReference type="KEGG" id="cno:NT01CX_0077"/>
<dbReference type="PATRIC" id="fig|386415.7.peg.1616"/>
<dbReference type="eggNOG" id="COG0536">
    <property type="taxonomic scope" value="Bacteria"/>
</dbReference>
<dbReference type="HOGENOM" id="CLU_011747_2_1_9"/>
<dbReference type="Proteomes" id="UP000008220">
    <property type="component" value="Chromosome"/>
</dbReference>
<dbReference type="GO" id="GO:0005737">
    <property type="term" value="C:cytoplasm"/>
    <property type="evidence" value="ECO:0007669"/>
    <property type="project" value="UniProtKB-SubCell"/>
</dbReference>
<dbReference type="GO" id="GO:0005525">
    <property type="term" value="F:GTP binding"/>
    <property type="evidence" value="ECO:0007669"/>
    <property type="project" value="UniProtKB-UniRule"/>
</dbReference>
<dbReference type="GO" id="GO:0003924">
    <property type="term" value="F:GTPase activity"/>
    <property type="evidence" value="ECO:0007669"/>
    <property type="project" value="UniProtKB-UniRule"/>
</dbReference>
<dbReference type="GO" id="GO:0000287">
    <property type="term" value="F:magnesium ion binding"/>
    <property type="evidence" value="ECO:0007669"/>
    <property type="project" value="InterPro"/>
</dbReference>
<dbReference type="GO" id="GO:0042254">
    <property type="term" value="P:ribosome biogenesis"/>
    <property type="evidence" value="ECO:0007669"/>
    <property type="project" value="UniProtKB-UniRule"/>
</dbReference>
<dbReference type="CDD" id="cd01898">
    <property type="entry name" value="Obg"/>
    <property type="match status" value="1"/>
</dbReference>
<dbReference type="FunFam" id="2.70.210.12:FF:000001">
    <property type="entry name" value="GTPase Obg"/>
    <property type="match status" value="1"/>
</dbReference>
<dbReference type="Gene3D" id="3.30.300.350">
    <property type="entry name" value="GTP-binding protein OBG, C-terminal domain"/>
    <property type="match status" value="1"/>
</dbReference>
<dbReference type="Gene3D" id="2.70.210.12">
    <property type="entry name" value="GTP1/OBG domain"/>
    <property type="match status" value="1"/>
</dbReference>
<dbReference type="Gene3D" id="3.40.50.300">
    <property type="entry name" value="P-loop containing nucleotide triphosphate hydrolases"/>
    <property type="match status" value="1"/>
</dbReference>
<dbReference type="HAMAP" id="MF_01454">
    <property type="entry name" value="GTPase_Obg"/>
    <property type="match status" value="1"/>
</dbReference>
<dbReference type="InterPro" id="IPR031167">
    <property type="entry name" value="G_OBG"/>
</dbReference>
<dbReference type="InterPro" id="IPR006073">
    <property type="entry name" value="GTP-bd"/>
</dbReference>
<dbReference type="InterPro" id="IPR014100">
    <property type="entry name" value="GTP-bd_Obg/CgtA"/>
</dbReference>
<dbReference type="InterPro" id="IPR036346">
    <property type="entry name" value="GTP-bd_prot_GTP1/OBG_C_sf"/>
</dbReference>
<dbReference type="InterPro" id="IPR006074">
    <property type="entry name" value="GTP1-OBG_CS"/>
</dbReference>
<dbReference type="InterPro" id="IPR006169">
    <property type="entry name" value="GTP1_OBG_dom"/>
</dbReference>
<dbReference type="InterPro" id="IPR036726">
    <property type="entry name" value="GTP1_OBG_dom_sf"/>
</dbReference>
<dbReference type="InterPro" id="IPR045086">
    <property type="entry name" value="OBG_GTPase"/>
</dbReference>
<dbReference type="InterPro" id="IPR015349">
    <property type="entry name" value="OCT_dom"/>
</dbReference>
<dbReference type="InterPro" id="IPR027417">
    <property type="entry name" value="P-loop_NTPase"/>
</dbReference>
<dbReference type="InterPro" id="IPR005225">
    <property type="entry name" value="Small_GTP-bd"/>
</dbReference>
<dbReference type="NCBIfam" id="TIGR02729">
    <property type="entry name" value="Obg_CgtA"/>
    <property type="match status" value="1"/>
</dbReference>
<dbReference type="NCBIfam" id="TIGR03595">
    <property type="entry name" value="Obg_CgtA_exten"/>
    <property type="match status" value="1"/>
</dbReference>
<dbReference type="NCBIfam" id="NF008954">
    <property type="entry name" value="PRK12296.1"/>
    <property type="match status" value="1"/>
</dbReference>
<dbReference type="NCBIfam" id="NF008955">
    <property type="entry name" value="PRK12297.1"/>
    <property type="match status" value="1"/>
</dbReference>
<dbReference type="NCBIfam" id="NF008956">
    <property type="entry name" value="PRK12299.1"/>
    <property type="match status" value="1"/>
</dbReference>
<dbReference type="NCBIfam" id="TIGR00231">
    <property type="entry name" value="small_GTP"/>
    <property type="match status" value="1"/>
</dbReference>
<dbReference type="PANTHER" id="PTHR11702">
    <property type="entry name" value="DEVELOPMENTALLY REGULATED GTP-BINDING PROTEIN-RELATED"/>
    <property type="match status" value="1"/>
</dbReference>
<dbReference type="PANTHER" id="PTHR11702:SF31">
    <property type="entry name" value="MITOCHONDRIAL RIBOSOME-ASSOCIATED GTPASE 2"/>
    <property type="match status" value="1"/>
</dbReference>
<dbReference type="Pfam" id="PF09269">
    <property type="entry name" value="DUF1967"/>
    <property type="match status" value="1"/>
</dbReference>
<dbReference type="Pfam" id="PF01018">
    <property type="entry name" value="GTP1_OBG"/>
    <property type="match status" value="1"/>
</dbReference>
<dbReference type="Pfam" id="PF01926">
    <property type="entry name" value="MMR_HSR1"/>
    <property type="match status" value="1"/>
</dbReference>
<dbReference type="PRINTS" id="PR00326">
    <property type="entry name" value="GTP1OBG"/>
</dbReference>
<dbReference type="SUPFAM" id="SSF102741">
    <property type="entry name" value="Obg GTP-binding protein C-terminal domain"/>
    <property type="match status" value="1"/>
</dbReference>
<dbReference type="SUPFAM" id="SSF82051">
    <property type="entry name" value="Obg GTP-binding protein N-terminal domain"/>
    <property type="match status" value="1"/>
</dbReference>
<dbReference type="SUPFAM" id="SSF52540">
    <property type="entry name" value="P-loop containing nucleoside triphosphate hydrolases"/>
    <property type="match status" value="1"/>
</dbReference>
<dbReference type="PROSITE" id="PS51710">
    <property type="entry name" value="G_OBG"/>
    <property type="match status" value="1"/>
</dbReference>
<dbReference type="PROSITE" id="PS00905">
    <property type="entry name" value="GTP1_OBG"/>
    <property type="match status" value="1"/>
</dbReference>
<dbReference type="PROSITE" id="PS51883">
    <property type="entry name" value="OBG"/>
    <property type="match status" value="1"/>
</dbReference>
<dbReference type="PROSITE" id="PS51881">
    <property type="entry name" value="OCT"/>
    <property type="match status" value="1"/>
</dbReference>
<evidence type="ECO:0000255" key="1">
    <source>
        <dbReference type="HAMAP-Rule" id="MF_01454"/>
    </source>
</evidence>
<evidence type="ECO:0000255" key="2">
    <source>
        <dbReference type="PROSITE-ProRule" id="PRU01229"/>
    </source>
</evidence>
<evidence type="ECO:0000255" key="3">
    <source>
        <dbReference type="PROSITE-ProRule" id="PRU01231"/>
    </source>
</evidence>
<sequence length="424" mass="47136">MFIDTAKILVKSGNGGNGCISFRREKYVAMGGPNGGDGGNGGSVILVADRNLTTLLDFTYRRKYVADNGEDGGNSKCFGKKGEDLYIKVPIGTVVKDVETGKTMVDLAKEGDSYIVARGGKGGKGNYHFATPTRQAPNFAEPGMPGEERMINLEIKLLADVGLIGFPNVGKSTLLSMVSKAKPKIANYHFTTLKPNLGVVKIEGANAFVMADIPGIIEGASEGVGLGLDFLRHIERTRLLVHVVDISGVEGRNPIEDFKKINEELKNYSVKLWDRPQIVVANKIDMLYDEEVFETFKKEVNKLGFDKVFKISAATRDGVDDLIKEVTRQLSMIPITEMEIPEEERFMPEEKRFTYTIRVEDGVYVVEGSFVDRLLKSVNVNDPDSLRYFHKVLRNKGILDELKEMGIQDEDTVRLNDFEFDFLL</sequence>
<comment type="function">
    <text evidence="1">An essential GTPase which binds GTP, GDP and possibly (p)ppGpp with moderate affinity, with high nucleotide exchange rates and a fairly low GTP hydrolysis rate. Plays a role in control of the cell cycle, stress response, ribosome biogenesis and in those bacteria that undergo differentiation, in morphogenesis control.</text>
</comment>
<comment type="cofactor">
    <cofactor evidence="1">
        <name>Mg(2+)</name>
        <dbReference type="ChEBI" id="CHEBI:18420"/>
    </cofactor>
</comment>
<comment type="subunit">
    <text evidence="1">Monomer.</text>
</comment>
<comment type="subcellular location">
    <subcellularLocation>
        <location evidence="1">Cytoplasm</location>
    </subcellularLocation>
</comment>
<comment type="similarity">
    <text evidence="1">Belongs to the TRAFAC class OBG-HflX-like GTPase superfamily. OBG GTPase family.</text>
</comment>
<gene>
    <name evidence="1" type="primary">obg</name>
    <name type="ordered locus">NT01CX_0077</name>
</gene>
<proteinExistence type="inferred from homology"/>
<feature type="chain" id="PRO_0000385849" description="GTPase Obg">
    <location>
        <begin position="1"/>
        <end position="424"/>
    </location>
</feature>
<feature type="domain" description="Obg" evidence="3">
    <location>
        <begin position="1"/>
        <end position="158"/>
    </location>
</feature>
<feature type="domain" description="OBG-type G" evidence="1">
    <location>
        <begin position="159"/>
        <end position="331"/>
    </location>
</feature>
<feature type="domain" description="OCT" evidence="2">
    <location>
        <begin position="345"/>
        <end position="424"/>
    </location>
</feature>
<feature type="binding site" evidence="1">
    <location>
        <begin position="165"/>
        <end position="172"/>
    </location>
    <ligand>
        <name>GTP</name>
        <dbReference type="ChEBI" id="CHEBI:37565"/>
    </ligand>
</feature>
<feature type="binding site" evidence="1">
    <location>
        <position position="172"/>
    </location>
    <ligand>
        <name>Mg(2+)</name>
        <dbReference type="ChEBI" id="CHEBI:18420"/>
    </ligand>
</feature>
<feature type="binding site" evidence="1">
    <location>
        <begin position="190"/>
        <end position="194"/>
    </location>
    <ligand>
        <name>GTP</name>
        <dbReference type="ChEBI" id="CHEBI:37565"/>
    </ligand>
</feature>
<feature type="binding site" evidence="1">
    <location>
        <position position="192"/>
    </location>
    <ligand>
        <name>Mg(2+)</name>
        <dbReference type="ChEBI" id="CHEBI:18420"/>
    </ligand>
</feature>
<feature type="binding site" evidence="1">
    <location>
        <begin position="212"/>
        <end position="215"/>
    </location>
    <ligand>
        <name>GTP</name>
        <dbReference type="ChEBI" id="CHEBI:37565"/>
    </ligand>
</feature>
<feature type="binding site" evidence="1">
    <location>
        <begin position="282"/>
        <end position="285"/>
    </location>
    <ligand>
        <name>GTP</name>
        <dbReference type="ChEBI" id="CHEBI:37565"/>
    </ligand>
</feature>
<feature type="binding site" evidence="1">
    <location>
        <begin position="312"/>
        <end position="314"/>
    </location>
    <ligand>
        <name>GTP</name>
        <dbReference type="ChEBI" id="CHEBI:37565"/>
    </ligand>
</feature>
<accession>A0Q1T4</accession>
<protein>
    <recommendedName>
        <fullName evidence="1">GTPase Obg</fullName>
        <ecNumber evidence="1">3.6.5.-</ecNumber>
    </recommendedName>
    <alternativeName>
        <fullName evidence="1">GTP-binding protein Obg</fullName>
    </alternativeName>
</protein>
<organism>
    <name type="scientific">Clostridium novyi (strain NT)</name>
    <dbReference type="NCBI Taxonomy" id="386415"/>
    <lineage>
        <taxon>Bacteria</taxon>
        <taxon>Bacillati</taxon>
        <taxon>Bacillota</taxon>
        <taxon>Clostridia</taxon>
        <taxon>Eubacteriales</taxon>
        <taxon>Clostridiaceae</taxon>
        <taxon>Clostridium</taxon>
    </lineage>
</organism>